<proteinExistence type="evidence at transcript level"/>
<protein>
    <recommendedName>
        <fullName>Endothelin-2</fullName>
        <shortName>ET-2</shortName>
    </recommendedName>
    <alternativeName>
        <fullName>Preproendothelin-2</fullName>
        <shortName>PPET2</shortName>
    </alternativeName>
    <alternativeName>
        <fullName>Vasoactive intestinal contractor</fullName>
        <shortName>VIC</shortName>
    </alternativeName>
</protein>
<gene>
    <name type="primary">Edn2</name>
</gene>
<sequence length="175" mass="19538">MVSAWCSIALALLLALHEGKGQAAATLEQPASAPKGRGPHLRFRRCSCNSWLDKECVYFCHLDIIWVNTAGQTAPYGLGNPPRRRRRSLPKRCECSTAGDSACATFCHRRHWPEAVVAPSSQAPAAVLKTGKMWTAEGDLLRKLRDISATKLRFARLQPEVTRKAIPAYSRWRKR</sequence>
<name>EDN2_MOUSE</name>
<feature type="signal peptide" evidence="2">
    <location>
        <begin position="1"/>
        <end position="21"/>
    </location>
</feature>
<feature type="propeptide" id="PRO_0000008099">
    <location>
        <begin position="22"/>
        <end position="43"/>
    </location>
</feature>
<feature type="peptide" id="PRO_0000008100" description="Endothelin-2">
    <location>
        <begin position="46"/>
        <end position="66"/>
    </location>
</feature>
<feature type="propeptide" id="PRO_0000008101">
    <location>
        <begin position="67"/>
        <end position="175"/>
    </location>
</feature>
<feature type="region of interest" description="Endothelin-like">
    <location>
        <begin position="93"/>
        <end position="108"/>
    </location>
</feature>
<feature type="site" description="Cleavage; by KEL" evidence="1">
    <location>
        <begin position="66"/>
        <end position="67"/>
    </location>
</feature>
<feature type="disulfide bond" evidence="1">
    <location>
        <begin position="46"/>
        <end position="60"/>
    </location>
</feature>
<feature type="disulfide bond" evidence="1">
    <location>
        <begin position="48"/>
        <end position="56"/>
    </location>
</feature>
<feature type="sequence conflict" description="In Ref. 1; CAA42155." evidence="3" ref="1">
    <original>KL</original>
    <variation>NV</variation>
    <location>
        <begin position="151"/>
        <end position="152"/>
    </location>
</feature>
<feature type="sequence conflict" description="In Ref. 1." evidence="3" ref="1">
    <original>RLQPEVTRKAIPAYSRWRKR</original>
    <variation>SYSQR</variation>
    <location>
        <begin position="156"/>
        <end position="175"/>
    </location>
</feature>
<keyword id="KW-0165">Cleavage on pair of basic residues</keyword>
<keyword id="KW-1015">Disulfide bond</keyword>
<keyword id="KW-1185">Reference proteome</keyword>
<keyword id="KW-0964">Secreted</keyword>
<keyword id="KW-0732">Signal</keyword>
<keyword id="KW-0838">Vasoactive</keyword>
<keyword id="KW-0839">Vasoconstrictor</keyword>
<dbReference type="EMBL" id="X59556">
    <property type="protein sequence ID" value="CAA42155.1"/>
    <property type="molecule type" value="mRNA"/>
</dbReference>
<dbReference type="EMBL" id="AB030303">
    <property type="protein sequence ID" value="BAA94208.1"/>
    <property type="molecule type" value="Genomic_DNA"/>
</dbReference>
<dbReference type="EMBL" id="BC037042">
    <property type="protein sequence ID" value="AAH37042.1"/>
    <property type="molecule type" value="mRNA"/>
</dbReference>
<dbReference type="EMBL" id="M26498">
    <property type="status" value="NOT_ANNOTATED_CDS"/>
    <property type="molecule type" value="Genomic_DNA"/>
</dbReference>
<dbReference type="CCDS" id="CCDS38864.1"/>
<dbReference type="PIR" id="S17194">
    <property type="entry name" value="S17194"/>
</dbReference>
<dbReference type="RefSeq" id="NP_031928.2">
    <property type="nucleotide sequence ID" value="NM_007902.3"/>
</dbReference>
<dbReference type="FunCoup" id="P22389">
    <property type="interactions" value="930"/>
</dbReference>
<dbReference type="STRING" id="10090.ENSMUSP00000030384"/>
<dbReference type="PhosphoSitePlus" id="P22389"/>
<dbReference type="PaxDb" id="10090-ENSMUSP00000030384"/>
<dbReference type="ProteomicsDB" id="275438"/>
<dbReference type="Antibodypedia" id="32186">
    <property type="antibodies" value="196 antibodies from 26 providers"/>
</dbReference>
<dbReference type="DNASU" id="13615"/>
<dbReference type="Ensembl" id="ENSMUST00000030384.5">
    <property type="protein sequence ID" value="ENSMUSP00000030384.5"/>
    <property type="gene ID" value="ENSMUSG00000028635.8"/>
</dbReference>
<dbReference type="GeneID" id="13615"/>
<dbReference type="KEGG" id="mmu:13615"/>
<dbReference type="UCSC" id="uc008unb.1">
    <property type="organism name" value="mouse"/>
</dbReference>
<dbReference type="AGR" id="MGI:95284"/>
<dbReference type="CTD" id="1907"/>
<dbReference type="MGI" id="MGI:95284">
    <property type="gene designation" value="Edn2"/>
</dbReference>
<dbReference type="VEuPathDB" id="HostDB:ENSMUSG00000028635"/>
<dbReference type="eggNOG" id="ENOG502S5KM">
    <property type="taxonomic scope" value="Eukaryota"/>
</dbReference>
<dbReference type="GeneTree" id="ENSGT00950000183053"/>
<dbReference type="HOGENOM" id="CLU_090013_2_1_1"/>
<dbReference type="InParanoid" id="P22389"/>
<dbReference type="OMA" id="PTAWCSV"/>
<dbReference type="OrthoDB" id="9362154at2759"/>
<dbReference type="PhylomeDB" id="P22389"/>
<dbReference type="TreeFam" id="TF333184"/>
<dbReference type="Reactome" id="R-MMU-375276">
    <property type="pathway name" value="Peptide ligand-binding receptors"/>
</dbReference>
<dbReference type="Reactome" id="R-MMU-416476">
    <property type="pathway name" value="G alpha (q) signalling events"/>
</dbReference>
<dbReference type="BioGRID-ORCS" id="13615">
    <property type="hits" value="2 hits in 77 CRISPR screens"/>
</dbReference>
<dbReference type="PRO" id="PR:P22389"/>
<dbReference type="Proteomes" id="UP000000589">
    <property type="component" value="Chromosome 4"/>
</dbReference>
<dbReference type="RNAct" id="P22389">
    <property type="molecule type" value="protein"/>
</dbReference>
<dbReference type="Bgee" id="ENSMUSG00000028635">
    <property type="expression patterns" value="Expressed in mesodermal cell in embryo and 42 other cell types or tissues"/>
</dbReference>
<dbReference type="GO" id="GO:0005615">
    <property type="term" value="C:extracellular space"/>
    <property type="evidence" value="ECO:0007669"/>
    <property type="project" value="Ensembl"/>
</dbReference>
<dbReference type="GO" id="GO:0031708">
    <property type="term" value="F:endothelin B receptor binding"/>
    <property type="evidence" value="ECO:0007669"/>
    <property type="project" value="Ensembl"/>
</dbReference>
<dbReference type="GO" id="GO:0005179">
    <property type="term" value="F:hormone activity"/>
    <property type="evidence" value="ECO:0007669"/>
    <property type="project" value="Ensembl"/>
</dbReference>
<dbReference type="GO" id="GO:0001525">
    <property type="term" value="P:angiogenesis"/>
    <property type="evidence" value="ECO:0000314"/>
    <property type="project" value="MGI"/>
</dbReference>
<dbReference type="GO" id="GO:0014824">
    <property type="term" value="P:artery smooth muscle contraction"/>
    <property type="evidence" value="ECO:0007669"/>
    <property type="project" value="Ensembl"/>
</dbReference>
<dbReference type="GO" id="GO:0048675">
    <property type="term" value="P:axon extension"/>
    <property type="evidence" value="ECO:0000314"/>
    <property type="project" value="MGI"/>
</dbReference>
<dbReference type="GO" id="GO:0009932">
    <property type="term" value="P:cell tip growth"/>
    <property type="evidence" value="ECO:0000314"/>
    <property type="project" value="MGI"/>
</dbReference>
<dbReference type="GO" id="GO:0019221">
    <property type="term" value="P:cytokine-mediated signaling pathway"/>
    <property type="evidence" value="ECO:0007669"/>
    <property type="project" value="Ensembl"/>
</dbReference>
<dbReference type="GO" id="GO:0043542">
    <property type="term" value="P:endothelial cell migration"/>
    <property type="evidence" value="ECO:0000314"/>
    <property type="project" value="MGI"/>
</dbReference>
<dbReference type="GO" id="GO:0097009">
    <property type="term" value="P:energy homeostasis"/>
    <property type="evidence" value="ECO:0000315"/>
    <property type="project" value="MGI"/>
</dbReference>
<dbReference type="GO" id="GO:0048286">
    <property type="term" value="P:lung alveolus development"/>
    <property type="evidence" value="ECO:0000315"/>
    <property type="project" value="MGI"/>
</dbReference>
<dbReference type="GO" id="GO:0042116">
    <property type="term" value="P:macrophage activation"/>
    <property type="evidence" value="ECO:0007669"/>
    <property type="project" value="Ensembl"/>
</dbReference>
<dbReference type="GO" id="GO:0048246">
    <property type="term" value="P:macrophage chemotaxis"/>
    <property type="evidence" value="ECO:0007669"/>
    <property type="project" value="Ensembl"/>
</dbReference>
<dbReference type="GO" id="GO:0031175">
    <property type="term" value="P:neuron projection development"/>
    <property type="evidence" value="ECO:0000314"/>
    <property type="project" value="MGI"/>
</dbReference>
<dbReference type="GO" id="GO:0030593">
    <property type="term" value="P:neutrophil chemotaxis"/>
    <property type="evidence" value="ECO:0007669"/>
    <property type="project" value="Ensembl"/>
</dbReference>
<dbReference type="GO" id="GO:0050850">
    <property type="term" value="P:positive regulation of calcium-mediated signaling"/>
    <property type="evidence" value="ECO:0007669"/>
    <property type="project" value="Ensembl"/>
</dbReference>
<dbReference type="GO" id="GO:0008284">
    <property type="term" value="P:positive regulation of cell population proliferation"/>
    <property type="evidence" value="ECO:0007669"/>
    <property type="project" value="Ensembl"/>
</dbReference>
<dbReference type="GO" id="GO:0010460">
    <property type="term" value="P:positive regulation of heart rate"/>
    <property type="evidence" value="ECO:0007669"/>
    <property type="project" value="Ensembl"/>
</dbReference>
<dbReference type="GO" id="GO:0002690">
    <property type="term" value="P:positive regulation of leukocyte chemotaxis"/>
    <property type="evidence" value="ECO:0007669"/>
    <property type="project" value="Ensembl"/>
</dbReference>
<dbReference type="GO" id="GO:0060585">
    <property type="term" value="P:positive regulation of prostaglandin-endoperoxide synthase activity"/>
    <property type="evidence" value="ECO:0000315"/>
    <property type="project" value="BHF-UCL"/>
</dbReference>
<dbReference type="GO" id="GO:0045987">
    <property type="term" value="P:positive regulation of smooth muscle contraction"/>
    <property type="evidence" value="ECO:0000314"/>
    <property type="project" value="MGI"/>
</dbReference>
<dbReference type="GO" id="GO:0001516">
    <property type="term" value="P:prostaglandin biosynthetic process"/>
    <property type="evidence" value="ECO:0000314"/>
    <property type="project" value="BHF-UCL"/>
</dbReference>
<dbReference type="GO" id="GO:0003100">
    <property type="term" value="P:regulation of systemic arterial blood pressure by endothelin"/>
    <property type="evidence" value="ECO:0007669"/>
    <property type="project" value="Ensembl"/>
</dbReference>
<dbReference type="GO" id="GO:0019229">
    <property type="term" value="P:regulation of vasoconstriction"/>
    <property type="evidence" value="ECO:0007669"/>
    <property type="project" value="InterPro"/>
</dbReference>
<dbReference type="GO" id="GO:0006939">
    <property type="term" value="P:smooth muscle contraction"/>
    <property type="evidence" value="ECO:0000314"/>
    <property type="project" value="MGI"/>
</dbReference>
<dbReference type="GO" id="GO:0001659">
    <property type="term" value="P:temperature homeostasis"/>
    <property type="evidence" value="ECO:0000315"/>
    <property type="project" value="MGI"/>
</dbReference>
<dbReference type="GO" id="GO:0001944">
    <property type="term" value="P:vasculature development"/>
    <property type="evidence" value="ECO:0000314"/>
    <property type="project" value="MGI"/>
</dbReference>
<dbReference type="GO" id="GO:0014826">
    <property type="term" value="P:vein smooth muscle contraction"/>
    <property type="evidence" value="ECO:0007669"/>
    <property type="project" value="Ensembl"/>
</dbReference>
<dbReference type="InterPro" id="IPR020475">
    <property type="entry name" value="Endothelin"/>
</dbReference>
<dbReference type="InterPro" id="IPR019764">
    <property type="entry name" value="Endothelin_toxin_CS"/>
</dbReference>
<dbReference type="InterPro" id="IPR001928">
    <property type="entry name" value="Endothln-like_toxin"/>
</dbReference>
<dbReference type="PANTHER" id="PTHR13874">
    <property type="entry name" value="ENDOTHELIN"/>
    <property type="match status" value="1"/>
</dbReference>
<dbReference type="PANTHER" id="PTHR13874:SF9">
    <property type="entry name" value="ENDOTHELIN-2"/>
    <property type="match status" value="1"/>
</dbReference>
<dbReference type="Pfam" id="PF00322">
    <property type="entry name" value="Endothelin"/>
    <property type="match status" value="1"/>
</dbReference>
<dbReference type="PRINTS" id="PR00365">
    <property type="entry name" value="ENDOTHELIN"/>
</dbReference>
<dbReference type="SMART" id="SM00272">
    <property type="entry name" value="END"/>
    <property type="match status" value="2"/>
</dbReference>
<dbReference type="PROSITE" id="PS00270">
    <property type="entry name" value="ENDOTHELIN"/>
    <property type="match status" value="2"/>
</dbReference>
<comment type="function">
    <text>Vasoconstrictor.</text>
</comment>
<comment type="subcellular location">
    <subcellularLocation>
        <location>Secreted</location>
    </subcellularLocation>
</comment>
<comment type="similarity">
    <text evidence="3">Belongs to the endothelin/sarafotoxin family.</text>
</comment>
<evidence type="ECO:0000250" key="1"/>
<evidence type="ECO:0000255" key="2"/>
<evidence type="ECO:0000305" key="3"/>
<organism>
    <name type="scientific">Mus musculus</name>
    <name type="common">Mouse</name>
    <dbReference type="NCBI Taxonomy" id="10090"/>
    <lineage>
        <taxon>Eukaryota</taxon>
        <taxon>Metazoa</taxon>
        <taxon>Chordata</taxon>
        <taxon>Craniata</taxon>
        <taxon>Vertebrata</taxon>
        <taxon>Euteleostomi</taxon>
        <taxon>Mammalia</taxon>
        <taxon>Eutheria</taxon>
        <taxon>Euarchontoglires</taxon>
        <taxon>Glires</taxon>
        <taxon>Rodentia</taxon>
        <taxon>Myomorpha</taxon>
        <taxon>Muroidea</taxon>
        <taxon>Muridae</taxon>
        <taxon>Murinae</taxon>
        <taxon>Mus</taxon>
        <taxon>Mus</taxon>
    </lineage>
</organism>
<accession>P22389</accession>
<accession>Q9JME3</accession>
<reference key="1">
    <citation type="journal article" date="1991" name="Biochim. Biophys. Acta">
        <title>cDNA cloning, sequence analysis and tissue distribution of a precursor for vasoactive intestinal contractor (VIC).</title>
        <authorList>
            <person name="Saida K."/>
            <person name="Mitsui Y."/>
        </authorList>
    </citation>
    <scope>NUCLEOTIDE SEQUENCE [MRNA]</scope>
    <source>
        <strain>ICR</strain>
    </source>
</reference>
<reference key="2">
    <citation type="journal article" date="2000" name="Genomics">
        <title>The prepro vasoactive intestinal contractor (VIC)/endothelin-2 gene (EDN2): structure, evolution, production, and embryonic expression.</title>
        <authorList>
            <person name="Saida K."/>
            <person name="Hashimoto M."/>
            <person name="Mitsui Y."/>
            <person name="Ishida N."/>
            <person name="Uchide T."/>
        </authorList>
    </citation>
    <scope>NUCLEOTIDE SEQUENCE [GENOMIC DNA]</scope>
</reference>
<reference key="3">
    <citation type="journal article" date="2004" name="Genome Res.">
        <title>The status, quality, and expansion of the NIH full-length cDNA project: the Mammalian Gene Collection (MGC).</title>
        <authorList>
            <consortium name="The MGC Project Team"/>
        </authorList>
    </citation>
    <scope>NUCLEOTIDE SEQUENCE [LARGE SCALE MRNA]</scope>
    <source>
        <tissue>Retina</tissue>
    </source>
</reference>
<reference key="4">
    <citation type="journal article" date="1989" name="J. Biol. Chem.">
        <title>A novel peptide, vasoactive intestinal contractor, of a new (endothelin) peptide family. Molecular cloning, expression, and biological activity.</title>
        <authorList>
            <person name="Saida K."/>
            <person name="Mitsui Y."/>
            <person name="Ishida N."/>
        </authorList>
    </citation>
    <scope>NUCLEOTIDE SEQUENCE [GENOMIC DNA] OF 41-70</scope>
</reference>